<dbReference type="EMBL" id="D89571">
    <property type="protein sequence ID" value="BAA22135.1"/>
    <property type="molecule type" value="mRNA"/>
</dbReference>
<dbReference type="EMBL" id="D89572">
    <property type="protein sequence ID" value="BAA22136.1"/>
    <property type="molecule type" value="Genomic_DNA"/>
</dbReference>
<dbReference type="EMBL" id="BC005679">
    <property type="protein sequence ID" value="AAH05679.1"/>
    <property type="molecule type" value="mRNA"/>
</dbReference>
<dbReference type="CCDS" id="CCDS17036.1"/>
<dbReference type="PIR" id="JC5613">
    <property type="entry name" value="JC5613"/>
</dbReference>
<dbReference type="RefSeq" id="NP_035651.1">
    <property type="nucleotide sequence ID" value="NM_011521.2"/>
</dbReference>
<dbReference type="RefSeq" id="XP_036016111.1">
    <property type="nucleotide sequence ID" value="XM_036160218.1"/>
</dbReference>
<dbReference type="BMRB" id="O35988"/>
<dbReference type="SMR" id="O35988"/>
<dbReference type="BioGRID" id="203604">
    <property type="interactions" value="7"/>
</dbReference>
<dbReference type="FunCoup" id="O35988">
    <property type="interactions" value="292"/>
</dbReference>
<dbReference type="IntAct" id="O35988">
    <property type="interactions" value="3"/>
</dbReference>
<dbReference type="MINT" id="O35988"/>
<dbReference type="STRING" id="10090.ENSMUSP00000017153"/>
<dbReference type="ChEMBL" id="CHEMBL2062355"/>
<dbReference type="GlyCosmos" id="O35988">
    <property type="glycosylation" value="3 sites, No reported glycans"/>
</dbReference>
<dbReference type="GlyGen" id="O35988">
    <property type="glycosylation" value="4 sites, 1 O-linked glycan (1 site)"/>
</dbReference>
<dbReference type="iPTMnet" id="O35988"/>
<dbReference type="PhosphoSitePlus" id="O35988"/>
<dbReference type="jPOST" id="O35988"/>
<dbReference type="PaxDb" id="10090-ENSMUSP00000017153"/>
<dbReference type="PeptideAtlas" id="O35988"/>
<dbReference type="ProteomicsDB" id="255375"/>
<dbReference type="Pumba" id="O35988"/>
<dbReference type="Antibodypedia" id="969">
    <property type="antibodies" value="497 antibodies from 41 providers"/>
</dbReference>
<dbReference type="DNASU" id="20971"/>
<dbReference type="Ensembl" id="ENSMUST00000017153.4">
    <property type="protein sequence ID" value="ENSMUSP00000017153.4"/>
    <property type="gene ID" value="ENSMUSG00000017009.4"/>
</dbReference>
<dbReference type="GeneID" id="20971"/>
<dbReference type="KEGG" id="mmu:20971"/>
<dbReference type="UCSC" id="uc008nuq.1">
    <property type="organism name" value="mouse"/>
</dbReference>
<dbReference type="AGR" id="MGI:1349164"/>
<dbReference type="CTD" id="6385"/>
<dbReference type="MGI" id="MGI:1349164">
    <property type="gene designation" value="Sdc4"/>
</dbReference>
<dbReference type="VEuPathDB" id="HostDB:ENSMUSG00000017009"/>
<dbReference type="eggNOG" id="ENOG502S1SZ">
    <property type="taxonomic scope" value="Eukaryota"/>
</dbReference>
<dbReference type="GeneTree" id="ENSGT00940000160663"/>
<dbReference type="HOGENOM" id="CLU_046599_3_0_1"/>
<dbReference type="InParanoid" id="O35988"/>
<dbReference type="OMA" id="WVPTEPK"/>
<dbReference type="OrthoDB" id="10044468at2759"/>
<dbReference type="PhylomeDB" id="O35988"/>
<dbReference type="TreeFam" id="TF320463"/>
<dbReference type="Reactome" id="R-MMU-1971475">
    <property type="pathway name" value="A tetrasaccharide linker sequence is required for GAG synthesis"/>
</dbReference>
<dbReference type="Reactome" id="R-MMU-2022928">
    <property type="pathway name" value="HS-GAG biosynthesis"/>
</dbReference>
<dbReference type="Reactome" id="R-MMU-2024096">
    <property type="pathway name" value="HS-GAG degradation"/>
</dbReference>
<dbReference type="Reactome" id="R-MMU-202733">
    <property type="pathway name" value="Cell surface interactions at the vascular wall"/>
</dbReference>
<dbReference type="Reactome" id="R-MMU-3000170">
    <property type="pathway name" value="Syndecan interactions"/>
</dbReference>
<dbReference type="Reactome" id="R-MMU-975634">
    <property type="pathway name" value="Retinoid metabolism and transport"/>
</dbReference>
<dbReference type="BioGRID-ORCS" id="20971">
    <property type="hits" value="2 hits in 78 CRISPR screens"/>
</dbReference>
<dbReference type="ChiTaRS" id="Sdc4">
    <property type="organism name" value="mouse"/>
</dbReference>
<dbReference type="PRO" id="PR:O35988"/>
<dbReference type="Proteomes" id="UP000000589">
    <property type="component" value="Chromosome 2"/>
</dbReference>
<dbReference type="RNAct" id="O35988">
    <property type="molecule type" value="protein"/>
</dbReference>
<dbReference type="Bgee" id="ENSMUSG00000017009">
    <property type="expression patterns" value="Expressed in vestibular membrane of cochlear duct and 286 other cell types or tissues"/>
</dbReference>
<dbReference type="ExpressionAtlas" id="O35988">
    <property type="expression patterns" value="baseline and differential"/>
</dbReference>
<dbReference type="GO" id="GO:0009986">
    <property type="term" value="C:cell surface"/>
    <property type="evidence" value="ECO:0000314"/>
    <property type="project" value="MGI"/>
</dbReference>
<dbReference type="GO" id="GO:0043034">
    <property type="term" value="C:costamere"/>
    <property type="evidence" value="ECO:0007669"/>
    <property type="project" value="Ensembl"/>
</dbReference>
<dbReference type="GO" id="GO:0005576">
    <property type="term" value="C:extracellular region"/>
    <property type="evidence" value="ECO:0007669"/>
    <property type="project" value="UniProtKB-SubCell"/>
</dbReference>
<dbReference type="GO" id="GO:0005925">
    <property type="term" value="C:focal adhesion"/>
    <property type="evidence" value="ECO:0007669"/>
    <property type="project" value="Ensembl"/>
</dbReference>
<dbReference type="GO" id="GO:0005796">
    <property type="term" value="C:Golgi lumen"/>
    <property type="evidence" value="ECO:0000304"/>
    <property type="project" value="Reactome"/>
</dbReference>
<dbReference type="GO" id="GO:0016020">
    <property type="term" value="C:membrane"/>
    <property type="evidence" value="ECO:0007669"/>
    <property type="project" value="UniProtKB-SubCell"/>
</dbReference>
<dbReference type="GO" id="GO:0001968">
    <property type="term" value="F:fibronectin binding"/>
    <property type="evidence" value="ECO:0007669"/>
    <property type="project" value="Ensembl"/>
</dbReference>
<dbReference type="GO" id="GO:0042802">
    <property type="term" value="F:identical protein binding"/>
    <property type="evidence" value="ECO:0007669"/>
    <property type="project" value="Ensembl"/>
</dbReference>
<dbReference type="GO" id="GO:0005080">
    <property type="term" value="F:protein kinase C binding"/>
    <property type="evidence" value="ECO:0007669"/>
    <property type="project" value="Ensembl"/>
</dbReference>
<dbReference type="GO" id="GO:0070053">
    <property type="term" value="F:thrombospondin receptor activity"/>
    <property type="evidence" value="ECO:0007669"/>
    <property type="project" value="Ensembl"/>
</dbReference>
<dbReference type="GO" id="GO:0060122">
    <property type="term" value="P:inner ear receptor cell stereocilium organization"/>
    <property type="evidence" value="ECO:0000316"/>
    <property type="project" value="MGI"/>
</dbReference>
<dbReference type="GO" id="GO:0042130">
    <property type="term" value="P:negative regulation of T cell proliferation"/>
    <property type="evidence" value="ECO:0007669"/>
    <property type="project" value="Ensembl"/>
</dbReference>
<dbReference type="GO" id="GO:0001843">
    <property type="term" value="P:neural tube closure"/>
    <property type="evidence" value="ECO:0000316"/>
    <property type="project" value="MGI"/>
</dbReference>
<dbReference type="GO" id="GO:1903543">
    <property type="term" value="P:positive regulation of exosomal secretion"/>
    <property type="evidence" value="ECO:0007669"/>
    <property type="project" value="Ensembl"/>
</dbReference>
<dbReference type="GO" id="GO:1903553">
    <property type="term" value="P:positive regulation of extracellular exosome assembly"/>
    <property type="evidence" value="ECO:0007669"/>
    <property type="project" value="Ensembl"/>
</dbReference>
<dbReference type="GO" id="GO:0051894">
    <property type="term" value="P:positive regulation of focal adhesion assembly"/>
    <property type="evidence" value="ECO:0007669"/>
    <property type="project" value="Ensembl"/>
</dbReference>
<dbReference type="GO" id="GO:0051496">
    <property type="term" value="P:positive regulation of stress fiber assembly"/>
    <property type="evidence" value="ECO:0007669"/>
    <property type="project" value="Ensembl"/>
</dbReference>
<dbReference type="GO" id="GO:0010762">
    <property type="term" value="P:regulation of fibroblast migration"/>
    <property type="evidence" value="ECO:0000315"/>
    <property type="project" value="UniProtKB"/>
</dbReference>
<dbReference type="GO" id="GO:0001657">
    <property type="term" value="P:ureteric bud development"/>
    <property type="evidence" value="ECO:0007669"/>
    <property type="project" value="Ensembl"/>
</dbReference>
<dbReference type="GO" id="GO:0042060">
    <property type="term" value="P:wound healing"/>
    <property type="evidence" value="ECO:0000316"/>
    <property type="project" value="MGI"/>
</dbReference>
<dbReference type="InterPro" id="IPR003585">
    <property type="entry name" value="Neurexin-like"/>
</dbReference>
<dbReference type="InterPro" id="IPR001050">
    <property type="entry name" value="Syndecan"/>
</dbReference>
<dbReference type="InterPro" id="IPR027789">
    <property type="entry name" value="Syndecan/Neurexin_dom"/>
</dbReference>
<dbReference type="InterPro" id="IPR030479">
    <property type="entry name" value="Syndecan_CS"/>
</dbReference>
<dbReference type="PANTHER" id="PTHR10915">
    <property type="entry name" value="SYNDECAN"/>
    <property type="match status" value="1"/>
</dbReference>
<dbReference type="PANTHER" id="PTHR10915:SF3">
    <property type="entry name" value="SYNDECAN-4"/>
    <property type="match status" value="1"/>
</dbReference>
<dbReference type="Pfam" id="PF01034">
    <property type="entry name" value="Syndecan"/>
    <property type="match status" value="1"/>
</dbReference>
<dbReference type="SMART" id="SM00294">
    <property type="entry name" value="4.1m"/>
    <property type="match status" value="1"/>
</dbReference>
<dbReference type="PROSITE" id="PS00964">
    <property type="entry name" value="SYNDECAN"/>
    <property type="match status" value="1"/>
</dbReference>
<protein>
    <recommendedName>
        <fullName evidence="9">Syndecan-4</fullName>
        <shortName>SYND4</shortName>
    </recommendedName>
    <alternativeName>
        <fullName>Ryudocan core protein</fullName>
    </alternativeName>
</protein>
<reference key="1">
    <citation type="journal article" date="1997" name="J. Biochem.">
        <title>Molecular cloning, genomic organization, promoter activity, and tissue-specific expression of the mouse ryudocan gene.</title>
        <authorList>
            <person name="Tsuzuki S."/>
            <person name="Kojima T."/>
            <person name="Katsumi A."/>
            <person name="Yamazaki T."/>
            <person name="Sugiura I."/>
            <person name="Saito H."/>
        </authorList>
    </citation>
    <scope>NUCLEOTIDE SEQUENCE [GENOMIC DNA / MRNA]</scope>
    <source>
        <strain>129/SvJ</strain>
        <strain>C3H/An</strain>
    </source>
</reference>
<reference key="2">
    <citation type="journal article" date="2004" name="Genome Res.">
        <title>The status, quality, and expansion of the NIH full-length cDNA project: the Mammalian Gene Collection (MGC).</title>
        <authorList>
            <consortium name="The MGC Project Team"/>
        </authorList>
    </citation>
    <scope>NUCLEOTIDE SEQUENCE [LARGE SCALE MRNA]</scope>
    <source>
        <tissue>Mammary tumor</tissue>
    </source>
</reference>
<reference key="3">
    <citation type="journal article" date="2000" name="J. Cell Biol.">
        <title>Shedding of syndecan-1 and -4 ectodomains is regulated by multiple signaling pathways and mediated by a TIMP-3-sensitive metalloproteinase.</title>
        <authorList>
            <person name="Fitzgerald M.L."/>
            <person name="Wang Z."/>
            <person name="Park P.W."/>
            <person name="Murphy G."/>
            <person name="Bernfield M."/>
        </authorList>
    </citation>
    <scope>SHEDDING</scope>
    <scope>SUBCELLULAR LOCATION</scope>
</reference>
<reference key="4">
    <citation type="journal article" date="2000" name="J. Cell. Physiol.">
        <title>Synectin, syndecan-4 cytoplasmic domain binding PDZ protein, inhibits cell migration.</title>
        <authorList>
            <person name="Gao Y."/>
            <person name="Li M."/>
            <person name="Chen W."/>
            <person name="Simons M."/>
        </authorList>
    </citation>
    <scope>INTERACTION WITH GIPC</scope>
</reference>
<reference key="5">
    <citation type="journal article" date="2002" name="J. Biol. Chem.">
        <title>Syndesmos, a syndecan-4 cytoplasmic domain interactor, binds to the focal adhesion adaptor proteins paxillin and Hic-5.</title>
        <authorList>
            <person name="Denhez F."/>
            <person name="Wilcox-Adelman S.A."/>
            <person name="Baciu P.C."/>
            <person name="Saoncella S."/>
            <person name="Lee S."/>
            <person name="French B."/>
            <person name="Neveu W."/>
            <person name="Goetinck P.F."/>
        </authorList>
    </citation>
    <scope>INTERACTION WITH NUDT16L1</scope>
</reference>
<reference key="6">
    <citation type="journal article" date="2005" name="Biochem. Biophys. Res. Commun.">
        <title>Dynamin II interacts with syndecan-4, a regulator of focal adhesion and stress-fiber formation.</title>
        <authorList>
            <person name="Yoo J."/>
            <person name="Jeong M.J."/>
            <person name="Cho H.J."/>
            <person name="Oh E.S."/>
            <person name="Han M.Y."/>
        </authorList>
    </citation>
    <scope>INTERACTION WITH DNM2</scope>
</reference>
<reference key="7">
    <citation type="journal article" date="2010" name="Cell">
        <title>A tissue-specific atlas of mouse protein phosphorylation and expression.</title>
        <authorList>
            <person name="Huttlin E.L."/>
            <person name="Jedrychowski M.P."/>
            <person name="Elias J.E."/>
            <person name="Goswami T."/>
            <person name="Rad R."/>
            <person name="Beausoleil S.A."/>
            <person name="Villen J."/>
            <person name="Haas W."/>
            <person name="Sowa M.E."/>
            <person name="Gygi S.P."/>
        </authorList>
    </citation>
    <scope>IDENTIFICATION BY MASS SPECTROMETRY [LARGE SCALE ANALYSIS]</scope>
    <source>
        <tissue>Kidney</tissue>
        <tissue>Liver</tissue>
        <tissue>Pancreas</tissue>
    </source>
</reference>
<sequence length="198" mass="21482">MAPACLLAPLLLLLLGGFPLVPGESIRETEVIDPQDLLEGRYFSGALPDDEDAGGSDDFELSGSGDLDDTEEPRPFPEVIEPLVPLDNHIPENAQPGIRVPSEPKELEENEVIPKRAPSDVGDDMSNKVSMSSTAQGSNIFERTEVLAALIVGGVVGILFAVFLILLLVYRMKKKDEGSYDLGKKPIYKKAPTNEFYA</sequence>
<proteinExistence type="evidence at protein level"/>
<evidence type="ECO:0000250" key="1">
    <source>
        <dbReference type="UniProtKB" id="P31431"/>
    </source>
</evidence>
<evidence type="ECO:0000250" key="2">
    <source>
        <dbReference type="UniProtKB" id="P34901"/>
    </source>
</evidence>
<evidence type="ECO:0000255" key="3"/>
<evidence type="ECO:0000256" key="4">
    <source>
        <dbReference type="SAM" id="MobiDB-lite"/>
    </source>
</evidence>
<evidence type="ECO:0000269" key="5">
    <source>
    </source>
</evidence>
<evidence type="ECO:0000269" key="6">
    <source>
    </source>
</evidence>
<evidence type="ECO:0000269" key="7">
    <source>
    </source>
</evidence>
<evidence type="ECO:0000269" key="8">
    <source>
    </source>
</evidence>
<evidence type="ECO:0000305" key="9"/>
<evidence type="ECO:0000312" key="10">
    <source>
        <dbReference type="MGI" id="MGI:1349164"/>
    </source>
</evidence>
<name>SDC4_MOUSE</name>
<comment type="function">
    <text evidence="1">Cell surface proteoglycan which regulates exosome biogenesis in concert with SDCBP and PDCD6IP.</text>
</comment>
<comment type="subunit">
    <text evidence="1 6 7 8">Homodimer. Interacts with CDCP1 and SDCBP (By similarity). Interacts (via its cytoplasmic domain) with GIPC (via its PDZ domain). Interacts (via its cytoplasmic domain) with NUDT16L1. Interacts with DNM2; this interaction is markedly enhanced at focal ahesion site upon induction of focal adhesions and stress-fiber formation (PubMed:15694365).</text>
</comment>
<comment type="interaction">
    <interactant intactId="EBI-9986850">
        <id>O35988</id>
    </interactant>
    <interactant intactId="EBI-8869614">
        <id>Q15113</id>
        <label>PCOLCE</label>
    </interactant>
    <organismsDiffer>true</organismsDiffer>
    <experiments>2</experiments>
</comment>
<comment type="subcellular location">
    <subcellularLocation>
        <location evidence="3">Membrane</location>
        <topology evidence="3">Single-pass type I membrane protein</topology>
    </subcellularLocation>
    <subcellularLocation>
        <location evidence="5">Secreted</location>
    </subcellularLocation>
    <text evidence="5">Shedding of the ectodomain produces a soluble form.</text>
</comment>
<comment type="tissue specificity">
    <text>Ubiquitous. Highest levels in liver, kidney and lung.</text>
</comment>
<comment type="PTM">
    <text evidence="5">Shedding is enhanced by a number of factors such as heparanase, thrombin or EGF. Also by stress and wound healing. PMA-mediated shedding is inhibited by TIMP3.</text>
</comment>
<comment type="PTM">
    <text evidence="2">O-glycosylated; contains both chondroitin sulfate and heparan sulfate. Ser-44, Ser-62 and Ser-64 can all be modified by either chondroitin sulfate or heparan sulfate, and the protein exists in forms that contain only chondroitin sulfate, only heparan sulfate and both chondroitin sulfate and heparan sulfate.</text>
</comment>
<comment type="similarity">
    <text evidence="9">Belongs to the syndecan proteoglycan family.</text>
</comment>
<keyword id="KW-0325">Glycoprotein</keyword>
<keyword id="KW-0357">Heparan sulfate</keyword>
<keyword id="KW-0472">Membrane</keyword>
<keyword id="KW-0654">Proteoglycan</keyword>
<keyword id="KW-1185">Reference proteome</keyword>
<keyword id="KW-0964">Secreted</keyword>
<keyword id="KW-0732">Signal</keyword>
<keyword id="KW-0812">Transmembrane</keyword>
<keyword id="KW-1133">Transmembrane helix</keyword>
<organism>
    <name type="scientific">Mus musculus</name>
    <name type="common">Mouse</name>
    <dbReference type="NCBI Taxonomy" id="10090"/>
    <lineage>
        <taxon>Eukaryota</taxon>
        <taxon>Metazoa</taxon>
        <taxon>Chordata</taxon>
        <taxon>Craniata</taxon>
        <taxon>Vertebrata</taxon>
        <taxon>Euteleostomi</taxon>
        <taxon>Mammalia</taxon>
        <taxon>Eutheria</taxon>
        <taxon>Euarchontoglires</taxon>
        <taxon>Glires</taxon>
        <taxon>Rodentia</taxon>
        <taxon>Myomorpha</taxon>
        <taxon>Muroidea</taxon>
        <taxon>Muridae</taxon>
        <taxon>Murinae</taxon>
        <taxon>Mus</taxon>
        <taxon>Mus</taxon>
    </lineage>
</organism>
<gene>
    <name evidence="10" type="primary">Sdc4</name>
</gene>
<accession>O35988</accession>
<feature type="signal peptide" evidence="3">
    <location>
        <begin position="1"/>
        <end position="23"/>
    </location>
</feature>
<feature type="chain" id="PRO_0000033512" description="Syndecan-4">
    <location>
        <begin position="24"/>
        <end position="198"/>
    </location>
</feature>
<feature type="topological domain" description="Extracellular" evidence="3">
    <location>
        <begin position="24"/>
        <end position="145"/>
    </location>
</feature>
<feature type="transmembrane region" description="Helical" evidence="3">
    <location>
        <begin position="146"/>
        <end position="170"/>
    </location>
</feature>
<feature type="topological domain" description="Cytoplasmic" evidence="3">
    <location>
        <begin position="171"/>
        <end position="198"/>
    </location>
</feature>
<feature type="region of interest" description="Disordered" evidence="4">
    <location>
        <begin position="42"/>
        <end position="76"/>
    </location>
</feature>
<feature type="region of interest" description="Disordered" evidence="4">
    <location>
        <begin position="94"/>
        <end position="130"/>
    </location>
</feature>
<feature type="compositionally biased region" description="Acidic residues" evidence="4">
    <location>
        <begin position="48"/>
        <end position="71"/>
    </location>
</feature>
<feature type="compositionally biased region" description="Basic and acidic residues" evidence="4">
    <location>
        <begin position="102"/>
        <end position="118"/>
    </location>
</feature>
<feature type="glycosylation site" description="O-linked (Xyl...) (glycosaminoglycan) serine" evidence="2">
    <location>
        <position position="44"/>
    </location>
</feature>
<feature type="glycosylation site" description="O-linked (Xyl...) (glycosaminoglycan) serine" evidence="2">
    <location>
        <position position="62"/>
    </location>
</feature>
<feature type="glycosylation site" description="O-linked (Xyl...) (glycosaminoglycan) serine" evidence="2">
    <location>
        <position position="64"/>
    </location>
</feature>